<evidence type="ECO:0000255" key="1">
    <source>
        <dbReference type="HAMAP-Rule" id="MF_02115"/>
    </source>
</evidence>
<evidence type="ECO:0000305" key="2">
    <source ref="2"/>
</evidence>
<evidence type="ECO:0007829" key="3">
    <source>
        <dbReference type="PDB" id="3GLV"/>
    </source>
</evidence>
<feature type="chain" id="PRO_0000406287" description="FAD synthase">
    <location>
        <begin position="1"/>
        <end position="142"/>
    </location>
</feature>
<feature type="binding site" evidence="2">
    <location>
        <begin position="9"/>
        <end position="10"/>
    </location>
    <ligand>
        <name>ATP</name>
        <dbReference type="ChEBI" id="CHEBI:30616"/>
    </ligand>
</feature>
<feature type="binding site" evidence="2">
    <location>
        <begin position="14"/>
        <end position="17"/>
    </location>
    <ligand>
        <name>ATP</name>
        <dbReference type="ChEBI" id="CHEBI:30616"/>
    </ligand>
</feature>
<feature type="binding site" evidence="2">
    <location>
        <position position="93"/>
    </location>
    <ligand>
        <name>ATP</name>
        <dbReference type="ChEBI" id="CHEBI:30616"/>
    </ligand>
</feature>
<feature type="binding site" evidence="2">
    <location>
        <position position="120"/>
    </location>
    <ligand>
        <name>ATP</name>
        <dbReference type="ChEBI" id="CHEBI:30616"/>
    </ligand>
</feature>
<feature type="strand" evidence="3">
    <location>
        <begin position="3"/>
        <end position="8"/>
    </location>
</feature>
<feature type="helix" evidence="3">
    <location>
        <begin position="15"/>
        <end position="25"/>
    </location>
</feature>
<feature type="strand" evidence="3">
    <location>
        <begin position="28"/>
        <end position="35"/>
    </location>
</feature>
<feature type="helix" evidence="3">
    <location>
        <begin position="38"/>
        <end position="43"/>
    </location>
</feature>
<feature type="helix" evidence="3">
    <location>
        <begin position="52"/>
        <end position="59"/>
    </location>
</feature>
<feature type="strand" evidence="3">
    <location>
        <begin position="66"/>
        <end position="70"/>
    </location>
</feature>
<feature type="helix" evidence="3">
    <location>
        <begin position="76"/>
        <end position="83"/>
    </location>
</feature>
<feature type="strand" evidence="3">
    <location>
        <begin position="86"/>
        <end position="90"/>
    </location>
</feature>
<feature type="helix" evidence="3">
    <location>
        <begin position="95"/>
        <end position="108"/>
    </location>
</feature>
<feature type="strand" evidence="3">
    <location>
        <begin position="113"/>
        <end position="116"/>
    </location>
</feature>
<keyword id="KW-0002">3D-structure</keyword>
<keyword id="KW-0067">ATP-binding</keyword>
<keyword id="KW-0274">FAD</keyword>
<keyword id="KW-0285">Flavoprotein</keyword>
<keyword id="KW-0288">FMN</keyword>
<keyword id="KW-0547">Nucleotide-binding</keyword>
<keyword id="KW-0548">Nucleotidyltransferase</keyword>
<keyword id="KW-0808">Transferase</keyword>
<gene>
    <name type="primary">ribL</name>
    <name type="ordered locus">TV1239</name>
    <name type="ORF">TVG1279046</name>
</gene>
<comment type="function">
    <text evidence="1">Catalyzes the transfer of the AMP portion of ATP to flavin mononucleotide (FMN) to produce flavin adenine dinucleotide (FAD) coenzyme.</text>
</comment>
<comment type="catalytic activity">
    <reaction evidence="1">
        <text>FMN + ATP + H(+) = FAD + diphosphate</text>
        <dbReference type="Rhea" id="RHEA:17237"/>
        <dbReference type="ChEBI" id="CHEBI:15378"/>
        <dbReference type="ChEBI" id="CHEBI:30616"/>
        <dbReference type="ChEBI" id="CHEBI:33019"/>
        <dbReference type="ChEBI" id="CHEBI:57692"/>
        <dbReference type="ChEBI" id="CHEBI:58210"/>
        <dbReference type="EC" id="2.7.7.2"/>
    </reaction>
</comment>
<comment type="cofactor">
    <cofactor evidence="1">
        <name>a divalent metal cation</name>
        <dbReference type="ChEBI" id="CHEBI:60240"/>
    </cofactor>
</comment>
<comment type="pathway">
    <text evidence="1">Cofactor biosynthesis; FAD biosynthesis; FAD from FMN: step 1/1.</text>
</comment>
<comment type="subunit">
    <text evidence="1">Homodimer.</text>
</comment>
<comment type="similarity">
    <text evidence="1">Belongs to the archaeal FAD synthase family.</text>
</comment>
<sequence length="142" mass="16009">MIRVMATGVFDILHLGHIHYLKESKKLGDELVVVVARDSTARNNGKIPIFDENSRLALISELKVVDRAILGHEGDMMKTVIEVKPDIITLGYDQKFDEAELQSKINKLGITVKIVRISKYDGQLNSSSSVRKKIMELIGERY</sequence>
<reference key="1">
    <citation type="journal article" date="2000" name="Proc. Natl. Acad. Sci. U.S.A.">
        <title>Archaeal adaptation to higher temperatures revealed by genomic sequence of Thermoplasma volcanium.</title>
        <authorList>
            <person name="Kawashima T."/>
            <person name="Amano N."/>
            <person name="Koike H."/>
            <person name="Makino S."/>
            <person name="Higuchi S."/>
            <person name="Kawashima-Ohya Y."/>
            <person name="Watanabe K."/>
            <person name="Yamazaki M."/>
            <person name="Kanehori K."/>
            <person name="Kawamoto T."/>
            <person name="Nunoshiba T."/>
            <person name="Yamamoto Y."/>
            <person name="Aramaki H."/>
            <person name="Makino K."/>
            <person name="Suzuki M."/>
        </authorList>
    </citation>
    <scope>NUCLEOTIDE SEQUENCE [LARGE SCALE GENOMIC DNA]</scope>
    <source>
        <strain>ATCC 51530 / DSM 4299 / JCM 9571 / NBRC 15438 / GSS1</strain>
    </source>
</reference>
<reference key="2">
    <citation type="submission" date="2009-05" db="PDB data bank">
        <title>The crystal structure of the lipopolysaccharide core biosynthesis protein from Thermoplasma volcanium GSS1.</title>
        <authorList>
            <consortium name="Midwest center for structural genomics (MCSG)"/>
        </authorList>
    </citation>
    <scope>X-RAY CRYSTALLOGRAPHY (1.99 ANGSTROMS) IN COMPLEX WITH AMP</scope>
</reference>
<proteinExistence type="evidence at protein level"/>
<accession>Q979C2</accession>
<dbReference type="EC" id="2.7.7.2" evidence="1"/>
<dbReference type="EMBL" id="BA000011">
    <property type="protein sequence ID" value="BAB60381.1"/>
    <property type="molecule type" value="Genomic_DNA"/>
</dbReference>
<dbReference type="RefSeq" id="WP_010917473.1">
    <property type="nucleotide sequence ID" value="NC_002689.2"/>
</dbReference>
<dbReference type="PDB" id="3GLV">
    <property type="method" value="X-ray"/>
    <property type="resolution" value="1.99 A"/>
    <property type="chains" value="A/B=1-142"/>
</dbReference>
<dbReference type="PDBsum" id="3GLV"/>
<dbReference type="SMR" id="Q979C2"/>
<dbReference type="STRING" id="273116.gene:9382044"/>
<dbReference type="PaxDb" id="273116-14325477"/>
<dbReference type="DNASU" id="1441355"/>
<dbReference type="GeneID" id="1441355"/>
<dbReference type="KEGG" id="tvo:TVG1279046"/>
<dbReference type="eggNOG" id="arCOG01222">
    <property type="taxonomic scope" value="Archaea"/>
</dbReference>
<dbReference type="HOGENOM" id="CLU_034585_2_1_2"/>
<dbReference type="OrthoDB" id="1912at2157"/>
<dbReference type="PhylomeDB" id="Q979C2"/>
<dbReference type="UniPathway" id="UPA00277">
    <property type="reaction ID" value="UER00407"/>
</dbReference>
<dbReference type="EvolutionaryTrace" id="Q979C2"/>
<dbReference type="Proteomes" id="UP000001017">
    <property type="component" value="Chromosome"/>
</dbReference>
<dbReference type="GO" id="GO:0005524">
    <property type="term" value="F:ATP binding"/>
    <property type="evidence" value="ECO:0007669"/>
    <property type="project" value="UniProtKB-UniRule"/>
</dbReference>
<dbReference type="GO" id="GO:0003919">
    <property type="term" value="F:FMN adenylyltransferase activity"/>
    <property type="evidence" value="ECO:0007669"/>
    <property type="project" value="UniProtKB-UniRule"/>
</dbReference>
<dbReference type="GO" id="GO:0006747">
    <property type="term" value="P:FAD biosynthetic process"/>
    <property type="evidence" value="ECO:0007669"/>
    <property type="project" value="UniProtKB-UniRule"/>
</dbReference>
<dbReference type="GO" id="GO:0046444">
    <property type="term" value="P:FMN metabolic process"/>
    <property type="evidence" value="ECO:0007669"/>
    <property type="project" value="UniProtKB-UniRule"/>
</dbReference>
<dbReference type="CDD" id="cd02170">
    <property type="entry name" value="cytidylyltransferase"/>
    <property type="match status" value="1"/>
</dbReference>
<dbReference type="Gene3D" id="3.40.50.620">
    <property type="entry name" value="HUPs"/>
    <property type="match status" value="1"/>
</dbReference>
<dbReference type="HAMAP" id="MF_02115">
    <property type="entry name" value="FAD_synth_arch"/>
    <property type="match status" value="1"/>
</dbReference>
<dbReference type="InterPro" id="IPR050385">
    <property type="entry name" value="Archaeal_FAD_synthase"/>
</dbReference>
<dbReference type="InterPro" id="IPR004821">
    <property type="entry name" value="Cyt_trans-like"/>
</dbReference>
<dbReference type="InterPro" id="IPR024902">
    <property type="entry name" value="FAD_synth_RibL"/>
</dbReference>
<dbReference type="InterPro" id="IPR014729">
    <property type="entry name" value="Rossmann-like_a/b/a_fold"/>
</dbReference>
<dbReference type="NCBIfam" id="TIGR00125">
    <property type="entry name" value="cyt_tran_rel"/>
    <property type="match status" value="1"/>
</dbReference>
<dbReference type="PANTHER" id="PTHR43793">
    <property type="entry name" value="FAD SYNTHASE"/>
    <property type="match status" value="1"/>
</dbReference>
<dbReference type="PANTHER" id="PTHR43793:SF1">
    <property type="entry name" value="FAD SYNTHASE"/>
    <property type="match status" value="1"/>
</dbReference>
<dbReference type="Pfam" id="PF01467">
    <property type="entry name" value="CTP_transf_like"/>
    <property type="match status" value="1"/>
</dbReference>
<dbReference type="SUPFAM" id="SSF52374">
    <property type="entry name" value="Nucleotidylyl transferase"/>
    <property type="match status" value="1"/>
</dbReference>
<organism>
    <name type="scientific">Thermoplasma volcanium (strain ATCC 51530 / DSM 4299 / JCM 9571 / NBRC 15438 / GSS1)</name>
    <dbReference type="NCBI Taxonomy" id="273116"/>
    <lineage>
        <taxon>Archaea</taxon>
        <taxon>Methanobacteriati</taxon>
        <taxon>Thermoplasmatota</taxon>
        <taxon>Thermoplasmata</taxon>
        <taxon>Thermoplasmatales</taxon>
        <taxon>Thermoplasmataceae</taxon>
        <taxon>Thermoplasma</taxon>
    </lineage>
</organism>
<name>RIBL_THEVO</name>
<protein>
    <recommendedName>
        <fullName evidence="1">FAD synthase</fullName>
        <ecNumber evidence="1">2.7.7.2</ecNumber>
    </recommendedName>
    <alternativeName>
        <fullName evidence="1">FMN adenylyltransferase</fullName>
    </alternativeName>
    <alternativeName>
        <fullName evidence="1">Flavin adenine dinucleotide synthase</fullName>
    </alternativeName>
</protein>